<feature type="chain" id="PRO_1000011797" description="Mannitol-1-phosphate 5-dehydrogenase">
    <location>
        <begin position="1"/>
        <end position="382"/>
    </location>
</feature>
<feature type="binding site" evidence="1">
    <location>
        <begin position="3"/>
        <end position="14"/>
    </location>
    <ligand>
        <name>NAD(+)</name>
        <dbReference type="ChEBI" id="CHEBI:57540"/>
    </ligand>
</feature>
<evidence type="ECO:0000255" key="1">
    <source>
        <dbReference type="HAMAP-Rule" id="MF_00196"/>
    </source>
</evidence>
<dbReference type="EC" id="1.1.1.17" evidence="1"/>
<dbReference type="EMBL" id="CP000783">
    <property type="protein sequence ID" value="ABU79064.1"/>
    <property type="molecule type" value="Genomic_DNA"/>
</dbReference>
<dbReference type="RefSeq" id="WP_012126114.1">
    <property type="nucleotide sequence ID" value="NC_009778.1"/>
</dbReference>
<dbReference type="SMR" id="A7MNE5"/>
<dbReference type="KEGG" id="esa:ESA_03878"/>
<dbReference type="PATRIC" id="fig|290339.8.peg.3450"/>
<dbReference type="HOGENOM" id="CLU_036089_2_0_6"/>
<dbReference type="Proteomes" id="UP000000260">
    <property type="component" value="Chromosome"/>
</dbReference>
<dbReference type="GO" id="GO:0005829">
    <property type="term" value="C:cytosol"/>
    <property type="evidence" value="ECO:0007669"/>
    <property type="project" value="TreeGrafter"/>
</dbReference>
<dbReference type="GO" id="GO:0008926">
    <property type="term" value="F:mannitol-1-phosphate 5-dehydrogenase activity"/>
    <property type="evidence" value="ECO:0007669"/>
    <property type="project" value="UniProtKB-UniRule"/>
</dbReference>
<dbReference type="GO" id="GO:0019592">
    <property type="term" value="P:mannitol catabolic process"/>
    <property type="evidence" value="ECO:0007669"/>
    <property type="project" value="TreeGrafter"/>
</dbReference>
<dbReference type="FunFam" id="1.10.1040.10:FF:000009">
    <property type="entry name" value="Mannitol-1-phosphate 5-dehydrogenase"/>
    <property type="match status" value="1"/>
</dbReference>
<dbReference type="FunFam" id="3.40.50.720:FF:000075">
    <property type="entry name" value="Mannitol-1-phosphate 5-dehydrogenase"/>
    <property type="match status" value="1"/>
</dbReference>
<dbReference type="Gene3D" id="1.10.1040.10">
    <property type="entry name" value="N-(1-d-carboxylethyl)-l-norvaline Dehydrogenase, domain 2"/>
    <property type="match status" value="1"/>
</dbReference>
<dbReference type="Gene3D" id="3.40.50.720">
    <property type="entry name" value="NAD(P)-binding Rossmann-like Domain"/>
    <property type="match status" value="1"/>
</dbReference>
<dbReference type="HAMAP" id="MF_00196">
    <property type="entry name" value="Mannitol_dehydrog"/>
    <property type="match status" value="1"/>
</dbReference>
<dbReference type="InterPro" id="IPR008927">
    <property type="entry name" value="6-PGluconate_DH-like_C_sf"/>
</dbReference>
<dbReference type="InterPro" id="IPR013328">
    <property type="entry name" value="6PGD_dom2"/>
</dbReference>
<dbReference type="InterPro" id="IPR023028">
    <property type="entry name" value="Mannitol_1_phos_5_DH"/>
</dbReference>
<dbReference type="InterPro" id="IPR000669">
    <property type="entry name" value="Mannitol_DH"/>
</dbReference>
<dbReference type="InterPro" id="IPR013118">
    <property type="entry name" value="Mannitol_DH_C"/>
</dbReference>
<dbReference type="InterPro" id="IPR023027">
    <property type="entry name" value="Mannitol_DH_CS"/>
</dbReference>
<dbReference type="InterPro" id="IPR013131">
    <property type="entry name" value="Mannitol_DH_N"/>
</dbReference>
<dbReference type="InterPro" id="IPR036291">
    <property type="entry name" value="NAD(P)-bd_dom_sf"/>
</dbReference>
<dbReference type="NCBIfam" id="NF002646">
    <property type="entry name" value="PRK02318.1-2"/>
    <property type="match status" value="1"/>
</dbReference>
<dbReference type="NCBIfam" id="NF002647">
    <property type="entry name" value="PRK02318.1-3"/>
    <property type="match status" value="1"/>
</dbReference>
<dbReference type="NCBIfam" id="NF002648">
    <property type="entry name" value="PRK02318.1-4"/>
    <property type="match status" value="1"/>
</dbReference>
<dbReference type="NCBIfam" id="NF002650">
    <property type="entry name" value="PRK02318.2-2"/>
    <property type="match status" value="1"/>
</dbReference>
<dbReference type="NCBIfam" id="NF002652">
    <property type="entry name" value="PRK02318.2-5"/>
    <property type="match status" value="1"/>
</dbReference>
<dbReference type="PANTHER" id="PTHR30524:SF0">
    <property type="entry name" value="ALTRONATE OXIDOREDUCTASE-RELATED"/>
    <property type="match status" value="1"/>
</dbReference>
<dbReference type="PANTHER" id="PTHR30524">
    <property type="entry name" value="MANNITOL-1-PHOSPHATE 5-DEHYDROGENASE"/>
    <property type="match status" value="1"/>
</dbReference>
<dbReference type="Pfam" id="PF01232">
    <property type="entry name" value="Mannitol_dh"/>
    <property type="match status" value="1"/>
</dbReference>
<dbReference type="Pfam" id="PF08125">
    <property type="entry name" value="Mannitol_dh_C"/>
    <property type="match status" value="1"/>
</dbReference>
<dbReference type="PRINTS" id="PR00084">
    <property type="entry name" value="MTLDHDRGNASE"/>
</dbReference>
<dbReference type="SUPFAM" id="SSF48179">
    <property type="entry name" value="6-phosphogluconate dehydrogenase C-terminal domain-like"/>
    <property type="match status" value="1"/>
</dbReference>
<dbReference type="SUPFAM" id="SSF51735">
    <property type="entry name" value="NAD(P)-binding Rossmann-fold domains"/>
    <property type="match status" value="1"/>
</dbReference>
<dbReference type="PROSITE" id="PS00974">
    <property type="entry name" value="MANNITOL_DHGENASE"/>
    <property type="match status" value="1"/>
</dbReference>
<reference key="1">
    <citation type="journal article" date="2010" name="PLoS ONE">
        <title>Genome sequence of Cronobacter sakazakii BAA-894 and comparative genomic hybridization analysis with other Cronobacter species.</title>
        <authorList>
            <person name="Kucerova E."/>
            <person name="Clifton S.W."/>
            <person name="Xia X.Q."/>
            <person name="Long F."/>
            <person name="Porwollik S."/>
            <person name="Fulton L."/>
            <person name="Fronick C."/>
            <person name="Minx P."/>
            <person name="Kyung K."/>
            <person name="Warren W."/>
            <person name="Fulton R."/>
            <person name="Feng D."/>
            <person name="Wollam A."/>
            <person name="Shah N."/>
            <person name="Bhonagiri V."/>
            <person name="Nash W.E."/>
            <person name="Hallsworth-Pepin K."/>
            <person name="Wilson R.K."/>
            <person name="McClelland M."/>
            <person name="Forsythe S.J."/>
        </authorList>
    </citation>
    <scope>NUCLEOTIDE SEQUENCE [LARGE SCALE GENOMIC DNA]</scope>
    <source>
        <strain>ATCC BAA-894</strain>
    </source>
</reference>
<keyword id="KW-0520">NAD</keyword>
<keyword id="KW-0560">Oxidoreductase</keyword>
<keyword id="KW-1185">Reference proteome</keyword>
<comment type="catalytic activity">
    <reaction evidence="1">
        <text>D-mannitol 1-phosphate + NAD(+) = beta-D-fructose 6-phosphate + NADH + H(+)</text>
        <dbReference type="Rhea" id="RHEA:19661"/>
        <dbReference type="ChEBI" id="CHEBI:15378"/>
        <dbReference type="ChEBI" id="CHEBI:57540"/>
        <dbReference type="ChEBI" id="CHEBI:57634"/>
        <dbReference type="ChEBI" id="CHEBI:57945"/>
        <dbReference type="ChEBI" id="CHEBI:61381"/>
        <dbReference type="EC" id="1.1.1.17"/>
    </reaction>
</comment>
<comment type="similarity">
    <text evidence="1">Belongs to the mannitol dehydrogenase family.</text>
</comment>
<gene>
    <name evidence="1" type="primary">mtlD</name>
    <name type="ordered locus">ESA_03878</name>
</gene>
<organism>
    <name type="scientific">Cronobacter sakazakii (strain ATCC BAA-894)</name>
    <name type="common">Enterobacter sakazakii</name>
    <dbReference type="NCBI Taxonomy" id="290339"/>
    <lineage>
        <taxon>Bacteria</taxon>
        <taxon>Pseudomonadati</taxon>
        <taxon>Pseudomonadota</taxon>
        <taxon>Gammaproteobacteria</taxon>
        <taxon>Enterobacterales</taxon>
        <taxon>Enterobacteriaceae</taxon>
        <taxon>Cronobacter</taxon>
    </lineage>
</organism>
<accession>A7MNE5</accession>
<sequence length="382" mass="41147">MKALHFGAGNIGRGFIGKLLADAGVGLTFADVNQTVLDALNARHSYQVRVVGEQEQIDTVSGVDAVNSTSEDVVTLIATVDLVTTAVGPVVLERIAPAIAKGLVLRKAQGNERPLNIIACENMVRGTSQLKTHVFNALEEGDKAWVESHIGFVDSAVDRIVPPSASAAHDPLEVTVETFSEWIVDKTQFKGELPTIAGMELTDNLMAFVERKLFTLNTGHAITAYLGKQAGHQTIRDAILDEKIRLVVRGAMEESGAVLIKRYGFDDAKHAAYIEKILSRFENPYLKDDVERVGRQPLRKLSAGDRLIKPLLGTLEYGLPHQNLVLGIAAAMHFRSEDDPQAQELAQLIADKGPQAALAQISGLDANSDVVASAVNAYNATA</sequence>
<name>MTLD_CROS8</name>
<protein>
    <recommendedName>
        <fullName evidence="1">Mannitol-1-phosphate 5-dehydrogenase</fullName>
        <ecNumber evidence="1">1.1.1.17</ecNumber>
    </recommendedName>
</protein>
<proteinExistence type="inferred from homology"/>